<comment type="catalytic activity">
    <reaction evidence="1">
        <text>(R)-pantothenate + ATP = (R)-4'-phosphopantothenate + ADP + H(+)</text>
        <dbReference type="Rhea" id="RHEA:16373"/>
        <dbReference type="ChEBI" id="CHEBI:10986"/>
        <dbReference type="ChEBI" id="CHEBI:15378"/>
        <dbReference type="ChEBI" id="CHEBI:29032"/>
        <dbReference type="ChEBI" id="CHEBI:30616"/>
        <dbReference type="ChEBI" id="CHEBI:456216"/>
        <dbReference type="EC" id="2.7.1.33"/>
    </reaction>
</comment>
<comment type="pathway">
    <text evidence="1">Cofactor biosynthesis; coenzyme A biosynthesis; CoA from (R)-pantothenate: step 1/5.</text>
</comment>
<comment type="subcellular location">
    <subcellularLocation>
        <location evidence="1">Cytoplasm</location>
    </subcellularLocation>
</comment>
<comment type="similarity">
    <text evidence="1">Belongs to the prokaryotic pantothenate kinase family.</text>
</comment>
<keyword id="KW-0067">ATP-binding</keyword>
<keyword id="KW-0173">Coenzyme A biosynthesis</keyword>
<keyword id="KW-0963">Cytoplasm</keyword>
<keyword id="KW-0418">Kinase</keyword>
<keyword id="KW-0547">Nucleotide-binding</keyword>
<keyword id="KW-1185">Reference proteome</keyword>
<keyword id="KW-0808">Transferase</keyword>
<sequence length="322" mass="36937">MPGTLDHFRADEYSPYHFFSSEEWAKFRADTPLTLSADEVKRLRSLDDPIDLDEVRRIYLSLSRLLSSHVEASQLLFEQRNRFLNMGDVNKTPFVIGIAGSVAVGKSTTARILKELLARWPSSPKVDLITTDGFLYPNEVLRRENLMERKGFPESYDIGALLRFLSAIKAGQPNVKAPRYSHLTYDVLPNEFTVIDQPDILIFEGINVLQSRDLPAGGRIVPIVSDFFDFSIYIDADEDFIHNWYVNRFMNLRQTAFRDPNSFFNRYASISEEAALSIAEGLWQNINLKNLRQNIVPTRPRADLILRKGENHLIDTVALRKL</sequence>
<evidence type="ECO:0000255" key="1">
    <source>
        <dbReference type="HAMAP-Rule" id="MF_00215"/>
    </source>
</evidence>
<proteinExistence type="inferred from homology"/>
<organism>
    <name type="scientific">Agrobacterium fabrum (strain C58 / ATCC 33970)</name>
    <name type="common">Agrobacterium tumefaciens (strain C58)</name>
    <dbReference type="NCBI Taxonomy" id="176299"/>
    <lineage>
        <taxon>Bacteria</taxon>
        <taxon>Pseudomonadati</taxon>
        <taxon>Pseudomonadota</taxon>
        <taxon>Alphaproteobacteria</taxon>
        <taxon>Hyphomicrobiales</taxon>
        <taxon>Rhizobiaceae</taxon>
        <taxon>Rhizobium/Agrobacterium group</taxon>
        <taxon>Agrobacterium</taxon>
        <taxon>Agrobacterium tumefaciens complex</taxon>
    </lineage>
</organism>
<dbReference type="EC" id="2.7.1.33" evidence="1"/>
<dbReference type="EMBL" id="AE007869">
    <property type="protein sequence ID" value="AAK85861.2"/>
    <property type="molecule type" value="Genomic_DNA"/>
</dbReference>
<dbReference type="PIR" id="AF2581">
    <property type="entry name" value="AF2581"/>
</dbReference>
<dbReference type="PIR" id="D97363">
    <property type="entry name" value="D97363"/>
</dbReference>
<dbReference type="RefSeq" id="NP_353076.2">
    <property type="nucleotide sequence ID" value="NC_003062.2"/>
</dbReference>
<dbReference type="SMR" id="Q8UJ92"/>
<dbReference type="STRING" id="176299.Atu0037"/>
<dbReference type="EnsemblBacteria" id="AAK85861">
    <property type="protein sequence ID" value="AAK85861"/>
    <property type="gene ID" value="Atu0037"/>
</dbReference>
<dbReference type="KEGG" id="atu:Atu0037"/>
<dbReference type="PATRIC" id="fig|176299.10.peg.37"/>
<dbReference type="eggNOG" id="COG1072">
    <property type="taxonomic scope" value="Bacteria"/>
</dbReference>
<dbReference type="HOGENOM" id="CLU_053818_1_1_5"/>
<dbReference type="OrthoDB" id="1550976at2"/>
<dbReference type="PhylomeDB" id="Q8UJ92"/>
<dbReference type="BioCyc" id="AGRO:ATU0037-MONOMER"/>
<dbReference type="UniPathway" id="UPA00241">
    <property type="reaction ID" value="UER00352"/>
</dbReference>
<dbReference type="Proteomes" id="UP000000813">
    <property type="component" value="Chromosome circular"/>
</dbReference>
<dbReference type="GO" id="GO:0005737">
    <property type="term" value="C:cytoplasm"/>
    <property type="evidence" value="ECO:0007669"/>
    <property type="project" value="UniProtKB-SubCell"/>
</dbReference>
<dbReference type="GO" id="GO:0005524">
    <property type="term" value="F:ATP binding"/>
    <property type="evidence" value="ECO:0007669"/>
    <property type="project" value="UniProtKB-UniRule"/>
</dbReference>
<dbReference type="GO" id="GO:0004594">
    <property type="term" value="F:pantothenate kinase activity"/>
    <property type="evidence" value="ECO:0007669"/>
    <property type="project" value="UniProtKB-UniRule"/>
</dbReference>
<dbReference type="GO" id="GO:0015937">
    <property type="term" value="P:coenzyme A biosynthetic process"/>
    <property type="evidence" value="ECO:0007669"/>
    <property type="project" value="UniProtKB-UniRule"/>
</dbReference>
<dbReference type="CDD" id="cd02025">
    <property type="entry name" value="PanK"/>
    <property type="match status" value="1"/>
</dbReference>
<dbReference type="Gene3D" id="3.40.50.300">
    <property type="entry name" value="P-loop containing nucleotide triphosphate hydrolases"/>
    <property type="match status" value="1"/>
</dbReference>
<dbReference type="HAMAP" id="MF_00215">
    <property type="entry name" value="Pantothen_kinase_1"/>
    <property type="match status" value="1"/>
</dbReference>
<dbReference type="InterPro" id="IPR027417">
    <property type="entry name" value="P-loop_NTPase"/>
</dbReference>
<dbReference type="InterPro" id="IPR004566">
    <property type="entry name" value="PanK"/>
</dbReference>
<dbReference type="InterPro" id="IPR006083">
    <property type="entry name" value="PRK/URK"/>
</dbReference>
<dbReference type="NCBIfam" id="TIGR00554">
    <property type="entry name" value="panK_bact"/>
    <property type="match status" value="1"/>
</dbReference>
<dbReference type="PANTHER" id="PTHR10285">
    <property type="entry name" value="URIDINE KINASE"/>
    <property type="match status" value="1"/>
</dbReference>
<dbReference type="Pfam" id="PF00485">
    <property type="entry name" value="PRK"/>
    <property type="match status" value="1"/>
</dbReference>
<dbReference type="PIRSF" id="PIRSF000545">
    <property type="entry name" value="Pantothenate_kin"/>
    <property type="match status" value="1"/>
</dbReference>
<dbReference type="SUPFAM" id="SSF52540">
    <property type="entry name" value="P-loop containing nucleoside triphosphate hydrolases"/>
    <property type="match status" value="1"/>
</dbReference>
<feature type="chain" id="PRO_0000194417" description="Pantothenate kinase">
    <location>
        <begin position="1"/>
        <end position="322"/>
    </location>
</feature>
<feature type="binding site" evidence="1">
    <location>
        <begin position="100"/>
        <end position="107"/>
    </location>
    <ligand>
        <name>ATP</name>
        <dbReference type="ChEBI" id="CHEBI:30616"/>
    </ligand>
</feature>
<gene>
    <name evidence="1" type="primary">coaA</name>
    <name type="synonym">panK</name>
    <name type="ordered locus">Atu0037</name>
    <name type="ORF">AGR_C_59</name>
</gene>
<name>COAA_AGRFC</name>
<accession>Q8UJ92</accession>
<reference key="1">
    <citation type="journal article" date="2001" name="Science">
        <title>The genome of the natural genetic engineer Agrobacterium tumefaciens C58.</title>
        <authorList>
            <person name="Wood D.W."/>
            <person name="Setubal J.C."/>
            <person name="Kaul R."/>
            <person name="Monks D.E."/>
            <person name="Kitajima J.P."/>
            <person name="Okura V.K."/>
            <person name="Zhou Y."/>
            <person name="Chen L."/>
            <person name="Wood G.E."/>
            <person name="Almeida N.F. Jr."/>
            <person name="Woo L."/>
            <person name="Chen Y."/>
            <person name="Paulsen I.T."/>
            <person name="Eisen J.A."/>
            <person name="Karp P.D."/>
            <person name="Bovee D. Sr."/>
            <person name="Chapman P."/>
            <person name="Clendenning J."/>
            <person name="Deatherage G."/>
            <person name="Gillet W."/>
            <person name="Grant C."/>
            <person name="Kutyavin T."/>
            <person name="Levy R."/>
            <person name="Li M.-J."/>
            <person name="McClelland E."/>
            <person name="Palmieri A."/>
            <person name="Raymond C."/>
            <person name="Rouse G."/>
            <person name="Saenphimmachak C."/>
            <person name="Wu Z."/>
            <person name="Romero P."/>
            <person name="Gordon D."/>
            <person name="Zhang S."/>
            <person name="Yoo H."/>
            <person name="Tao Y."/>
            <person name="Biddle P."/>
            <person name="Jung M."/>
            <person name="Krespan W."/>
            <person name="Perry M."/>
            <person name="Gordon-Kamm B."/>
            <person name="Liao L."/>
            <person name="Kim S."/>
            <person name="Hendrick C."/>
            <person name="Zhao Z.-Y."/>
            <person name="Dolan M."/>
            <person name="Chumley F."/>
            <person name="Tingey S.V."/>
            <person name="Tomb J.-F."/>
            <person name="Gordon M.P."/>
            <person name="Olson M.V."/>
            <person name="Nester E.W."/>
        </authorList>
    </citation>
    <scope>NUCLEOTIDE SEQUENCE [LARGE SCALE GENOMIC DNA]</scope>
    <source>
        <strain>C58 / ATCC 33970</strain>
    </source>
</reference>
<reference key="2">
    <citation type="journal article" date="2001" name="Science">
        <title>Genome sequence of the plant pathogen and biotechnology agent Agrobacterium tumefaciens C58.</title>
        <authorList>
            <person name="Goodner B."/>
            <person name="Hinkle G."/>
            <person name="Gattung S."/>
            <person name="Miller N."/>
            <person name="Blanchard M."/>
            <person name="Qurollo B."/>
            <person name="Goldman B.S."/>
            <person name="Cao Y."/>
            <person name="Askenazi M."/>
            <person name="Halling C."/>
            <person name="Mullin L."/>
            <person name="Houmiel K."/>
            <person name="Gordon J."/>
            <person name="Vaudin M."/>
            <person name="Iartchouk O."/>
            <person name="Epp A."/>
            <person name="Liu F."/>
            <person name="Wollam C."/>
            <person name="Allinger M."/>
            <person name="Doughty D."/>
            <person name="Scott C."/>
            <person name="Lappas C."/>
            <person name="Markelz B."/>
            <person name="Flanagan C."/>
            <person name="Crowell C."/>
            <person name="Gurson J."/>
            <person name="Lomo C."/>
            <person name="Sear C."/>
            <person name="Strub G."/>
            <person name="Cielo C."/>
            <person name="Slater S."/>
        </authorList>
    </citation>
    <scope>NUCLEOTIDE SEQUENCE [LARGE SCALE GENOMIC DNA]</scope>
    <source>
        <strain>C58 / ATCC 33970</strain>
    </source>
</reference>
<protein>
    <recommendedName>
        <fullName evidence="1">Pantothenate kinase</fullName>
        <ecNumber evidence="1">2.7.1.33</ecNumber>
    </recommendedName>
    <alternativeName>
        <fullName evidence="1">Pantothenic acid kinase</fullName>
    </alternativeName>
</protein>